<reference key="1">
    <citation type="journal article" date="2013" name="Plant Physiol.">
        <title>A Nostoc punctiforme Sugar Transporter Necessary to Establish a Cyanobacterium-Plant Symbiosis.</title>
        <authorList>
            <person name="Ekman M."/>
            <person name="Picossi S."/>
            <person name="Campbell E.L."/>
            <person name="Meeks J.C."/>
            <person name="Flores E."/>
        </authorList>
    </citation>
    <scope>NUCLEOTIDE SEQUENCE [LARGE SCALE GENOMIC DNA]</scope>
    <source>
        <strain>ATCC 29133 / PCC 73102</strain>
    </source>
</reference>
<name>ISPH_NOSP7</name>
<sequence length="402" mass="45678">MDTKAFKRSLQHSENYNRKGFGHQAEVATQLQSEYQSNLIQEIRDRNYILQRGDVTIRLAQAFGFCWGVERAVAMAYETRQHFPTEHIWITNEIIHNPSVNQRMQEMEVEFIPIEGKNKDFSVVGTGDVVILPAFGASVQEMQILHDKGCKIVDTTCPWVSKVWNTVEKHKKIDYTSIIHGKYKHEETVATSSFAGKYLIVLNLQEAQYVADYIINGGNREEFLTKFAKACSAGFDPDRDLERVGIANQTTMLKDETEQIGKLFERTMLQKYSPIELNQHFQSFNTICDATQERQDAMLELVEHNLNLMVVIGGFNSSNTTQLQQIAFERRIPSYHIDTVERIKSGDSIEHRQLNGQLITTENWLPDGEIVVGITSGASTPDKVVEDVIEKIFAVKATAALV</sequence>
<gene>
    <name evidence="1" type="primary">ispH</name>
    <name type="ordered locus">Npun_R3286</name>
</gene>
<evidence type="ECO:0000255" key="1">
    <source>
        <dbReference type="HAMAP-Rule" id="MF_00191"/>
    </source>
</evidence>
<comment type="function">
    <text evidence="1">Catalyzes the conversion of 1-hydroxy-2-methyl-2-(E)-butenyl 4-diphosphate (HMBPP) into a mixture of isopentenyl diphosphate (IPP) and dimethylallyl diphosphate (DMAPP). Acts in the terminal step of the DOXP/MEP pathway for isoprenoid precursor biosynthesis.</text>
</comment>
<comment type="catalytic activity">
    <reaction evidence="1">
        <text>isopentenyl diphosphate + 2 oxidized [2Fe-2S]-[ferredoxin] + H2O = (2E)-4-hydroxy-3-methylbut-2-enyl diphosphate + 2 reduced [2Fe-2S]-[ferredoxin] + 2 H(+)</text>
        <dbReference type="Rhea" id="RHEA:24488"/>
        <dbReference type="Rhea" id="RHEA-COMP:10000"/>
        <dbReference type="Rhea" id="RHEA-COMP:10001"/>
        <dbReference type="ChEBI" id="CHEBI:15377"/>
        <dbReference type="ChEBI" id="CHEBI:15378"/>
        <dbReference type="ChEBI" id="CHEBI:33737"/>
        <dbReference type="ChEBI" id="CHEBI:33738"/>
        <dbReference type="ChEBI" id="CHEBI:128753"/>
        <dbReference type="ChEBI" id="CHEBI:128769"/>
        <dbReference type="EC" id="1.17.7.4"/>
    </reaction>
</comment>
<comment type="catalytic activity">
    <reaction evidence="1">
        <text>dimethylallyl diphosphate + 2 oxidized [2Fe-2S]-[ferredoxin] + H2O = (2E)-4-hydroxy-3-methylbut-2-enyl diphosphate + 2 reduced [2Fe-2S]-[ferredoxin] + 2 H(+)</text>
        <dbReference type="Rhea" id="RHEA:24825"/>
        <dbReference type="Rhea" id="RHEA-COMP:10000"/>
        <dbReference type="Rhea" id="RHEA-COMP:10001"/>
        <dbReference type="ChEBI" id="CHEBI:15377"/>
        <dbReference type="ChEBI" id="CHEBI:15378"/>
        <dbReference type="ChEBI" id="CHEBI:33737"/>
        <dbReference type="ChEBI" id="CHEBI:33738"/>
        <dbReference type="ChEBI" id="CHEBI:57623"/>
        <dbReference type="ChEBI" id="CHEBI:128753"/>
        <dbReference type="EC" id="1.17.7.4"/>
    </reaction>
</comment>
<comment type="cofactor">
    <cofactor evidence="1">
        <name>[4Fe-4S] cluster</name>
        <dbReference type="ChEBI" id="CHEBI:49883"/>
    </cofactor>
    <text evidence="1">Binds 1 [4Fe-4S] cluster per subunit.</text>
</comment>
<comment type="pathway">
    <text evidence="1">Isoprenoid biosynthesis; dimethylallyl diphosphate biosynthesis; dimethylallyl diphosphate from (2E)-4-hydroxy-3-methylbutenyl diphosphate: step 1/1.</text>
</comment>
<comment type="pathway">
    <text evidence="1">Isoprenoid biosynthesis; isopentenyl diphosphate biosynthesis via DXP pathway; isopentenyl diphosphate from 1-deoxy-D-xylulose 5-phosphate: step 6/6.</text>
</comment>
<comment type="similarity">
    <text evidence="1">Belongs to the IspH family.</text>
</comment>
<organism>
    <name type="scientific">Nostoc punctiforme (strain ATCC 29133 / PCC 73102)</name>
    <dbReference type="NCBI Taxonomy" id="63737"/>
    <lineage>
        <taxon>Bacteria</taxon>
        <taxon>Bacillati</taxon>
        <taxon>Cyanobacteriota</taxon>
        <taxon>Cyanophyceae</taxon>
        <taxon>Nostocales</taxon>
        <taxon>Nostocaceae</taxon>
        <taxon>Nostoc</taxon>
    </lineage>
</organism>
<keyword id="KW-0004">4Fe-4S</keyword>
<keyword id="KW-0408">Iron</keyword>
<keyword id="KW-0411">Iron-sulfur</keyword>
<keyword id="KW-0414">Isoprene biosynthesis</keyword>
<keyword id="KW-0479">Metal-binding</keyword>
<keyword id="KW-0560">Oxidoreductase</keyword>
<keyword id="KW-1185">Reference proteome</keyword>
<dbReference type="EC" id="1.17.7.4" evidence="1"/>
<dbReference type="EMBL" id="CP001037">
    <property type="protein sequence ID" value="ACC81726.1"/>
    <property type="molecule type" value="Genomic_DNA"/>
</dbReference>
<dbReference type="RefSeq" id="WP_012409705.1">
    <property type="nucleotide sequence ID" value="NC_010628.1"/>
</dbReference>
<dbReference type="SMR" id="B2IZV5"/>
<dbReference type="STRING" id="63737.Npun_R3286"/>
<dbReference type="EnsemblBacteria" id="ACC81726">
    <property type="protein sequence ID" value="ACC81726"/>
    <property type="gene ID" value="Npun_R3286"/>
</dbReference>
<dbReference type="KEGG" id="npu:Npun_R3286"/>
<dbReference type="eggNOG" id="COG0761">
    <property type="taxonomic scope" value="Bacteria"/>
</dbReference>
<dbReference type="HOGENOM" id="CLU_027486_4_0_3"/>
<dbReference type="OrthoDB" id="9804077at2"/>
<dbReference type="PhylomeDB" id="B2IZV5"/>
<dbReference type="UniPathway" id="UPA00056">
    <property type="reaction ID" value="UER00097"/>
</dbReference>
<dbReference type="UniPathway" id="UPA00059">
    <property type="reaction ID" value="UER00105"/>
</dbReference>
<dbReference type="Proteomes" id="UP000001191">
    <property type="component" value="Chromosome"/>
</dbReference>
<dbReference type="GO" id="GO:0051539">
    <property type="term" value="F:4 iron, 4 sulfur cluster binding"/>
    <property type="evidence" value="ECO:0007669"/>
    <property type="project" value="UniProtKB-UniRule"/>
</dbReference>
<dbReference type="GO" id="GO:0051745">
    <property type="term" value="F:4-hydroxy-3-methylbut-2-enyl diphosphate reductase activity"/>
    <property type="evidence" value="ECO:0007669"/>
    <property type="project" value="UniProtKB-UniRule"/>
</dbReference>
<dbReference type="GO" id="GO:0046872">
    <property type="term" value="F:metal ion binding"/>
    <property type="evidence" value="ECO:0007669"/>
    <property type="project" value="UniProtKB-KW"/>
</dbReference>
<dbReference type="GO" id="GO:0050992">
    <property type="term" value="P:dimethylallyl diphosphate biosynthetic process"/>
    <property type="evidence" value="ECO:0007669"/>
    <property type="project" value="UniProtKB-UniRule"/>
</dbReference>
<dbReference type="GO" id="GO:0019288">
    <property type="term" value="P:isopentenyl diphosphate biosynthetic process, methylerythritol 4-phosphate pathway"/>
    <property type="evidence" value="ECO:0007669"/>
    <property type="project" value="UniProtKB-UniRule"/>
</dbReference>
<dbReference type="GO" id="GO:0016114">
    <property type="term" value="P:terpenoid biosynthetic process"/>
    <property type="evidence" value="ECO:0007669"/>
    <property type="project" value="UniProtKB-UniRule"/>
</dbReference>
<dbReference type="CDD" id="cd13944">
    <property type="entry name" value="lytB_ispH"/>
    <property type="match status" value="1"/>
</dbReference>
<dbReference type="Gene3D" id="3.40.50.11270">
    <property type="match status" value="1"/>
</dbReference>
<dbReference type="Gene3D" id="3.40.1010.20">
    <property type="entry name" value="4-hydroxy-3-methylbut-2-enyl diphosphate reductase, catalytic domain"/>
    <property type="match status" value="2"/>
</dbReference>
<dbReference type="HAMAP" id="MF_00191">
    <property type="entry name" value="IspH"/>
    <property type="match status" value="1"/>
</dbReference>
<dbReference type="InterPro" id="IPR003451">
    <property type="entry name" value="LytB/IspH"/>
</dbReference>
<dbReference type="NCBIfam" id="TIGR00216">
    <property type="entry name" value="ispH_lytB"/>
    <property type="match status" value="1"/>
</dbReference>
<dbReference type="NCBIfam" id="NF009911">
    <property type="entry name" value="PRK13371.1"/>
    <property type="match status" value="1"/>
</dbReference>
<dbReference type="PANTHER" id="PTHR31619">
    <property type="entry name" value="4-HYDROXY-3-METHYLBUT-2-ENYL DIPHOSPHATE REDUCTASE, CHLOROPLASTIC"/>
    <property type="match status" value="1"/>
</dbReference>
<dbReference type="PANTHER" id="PTHR31619:SF5">
    <property type="entry name" value="4-HYDROXY-3-METHYLBUT-2-ENYL DIPHOSPHATE REDUCTASE, CHLOROPLASTIC"/>
    <property type="match status" value="1"/>
</dbReference>
<dbReference type="Pfam" id="PF02401">
    <property type="entry name" value="LYTB"/>
    <property type="match status" value="1"/>
</dbReference>
<accession>B2IZV5</accession>
<feature type="chain" id="PRO_1000098959" description="4-hydroxy-3-methylbut-2-enyl diphosphate reductase">
    <location>
        <begin position="1"/>
        <end position="402"/>
    </location>
</feature>
<feature type="active site" description="Proton donor" evidence="1">
    <location>
        <position position="187"/>
    </location>
</feature>
<feature type="binding site" evidence="1">
    <location>
        <position position="66"/>
    </location>
    <ligand>
        <name>[4Fe-4S] cluster</name>
        <dbReference type="ChEBI" id="CHEBI:49883"/>
    </ligand>
</feature>
<feature type="binding site" evidence="1">
    <location>
        <position position="96"/>
    </location>
    <ligand>
        <name>(2E)-4-hydroxy-3-methylbut-2-enyl diphosphate</name>
        <dbReference type="ChEBI" id="CHEBI:128753"/>
    </ligand>
</feature>
<feature type="binding site" evidence="1">
    <location>
        <position position="96"/>
    </location>
    <ligand>
        <name>dimethylallyl diphosphate</name>
        <dbReference type="ChEBI" id="CHEBI:57623"/>
    </ligand>
</feature>
<feature type="binding site" evidence="1">
    <location>
        <position position="96"/>
    </location>
    <ligand>
        <name>isopentenyl diphosphate</name>
        <dbReference type="ChEBI" id="CHEBI:128769"/>
    </ligand>
</feature>
<feature type="binding site" evidence="1">
    <location>
        <position position="157"/>
    </location>
    <ligand>
        <name>[4Fe-4S] cluster</name>
        <dbReference type="ChEBI" id="CHEBI:49883"/>
    </ligand>
</feature>
<feature type="binding site" evidence="1">
    <location>
        <position position="185"/>
    </location>
    <ligand>
        <name>(2E)-4-hydroxy-3-methylbut-2-enyl diphosphate</name>
        <dbReference type="ChEBI" id="CHEBI:128753"/>
    </ligand>
</feature>
<feature type="binding site" evidence="1">
    <location>
        <position position="185"/>
    </location>
    <ligand>
        <name>dimethylallyl diphosphate</name>
        <dbReference type="ChEBI" id="CHEBI:57623"/>
    </ligand>
</feature>
<feature type="binding site" evidence="1">
    <location>
        <position position="185"/>
    </location>
    <ligand>
        <name>isopentenyl diphosphate</name>
        <dbReference type="ChEBI" id="CHEBI:128769"/>
    </ligand>
</feature>
<feature type="binding site" evidence="1">
    <location>
        <position position="250"/>
    </location>
    <ligand>
        <name>(2E)-4-hydroxy-3-methylbut-2-enyl diphosphate</name>
        <dbReference type="ChEBI" id="CHEBI:128753"/>
    </ligand>
</feature>
<feature type="binding site" evidence="1">
    <location>
        <position position="288"/>
    </location>
    <ligand>
        <name>[4Fe-4S] cluster</name>
        <dbReference type="ChEBI" id="CHEBI:49883"/>
    </ligand>
</feature>
<feature type="binding site" evidence="1">
    <location>
        <position position="317"/>
    </location>
    <ligand>
        <name>(2E)-4-hydroxy-3-methylbut-2-enyl diphosphate</name>
        <dbReference type="ChEBI" id="CHEBI:128753"/>
    </ligand>
</feature>
<feature type="binding site" evidence="1">
    <location>
        <position position="317"/>
    </location>
    <ligand>
        <name>dimethylallyl diphosphate</name>
        <dbReference type="ChEBI" id="CHEBI:57623"/>
    </ligand>
</feature>
<feature type="binding site" evidence="1">
    <location>
        <position position="317"/>
    </location>
    <ligand>
        <name>isopentenyl diphosphate</name>
        <dbReference type="ChEBI" id="CHEBI:128769"/>
    </ligand>
</feature>
<feature type="binding site" evidence="1">
    <location>
        <position position="318"/>
    </location>
    <ligand>
        <name>(2E)-4-hydroxy-3-methylbut-2-enyl diphosphate</name>
        <dbReference type="ChEBI" id="CHEBI:128753"/>
    </ligand>
</feature>
<feature type="binding site" evidence="1">
    <location>
        <position position="318"/>
    </location>
    <ligand>
        <name>dimethylallyl diphosphate</name>
        <dbReference type="ChEBI" id="CHEBI:57623"/>
    </ligand>
</feature>
<feature type="binding site" evidence="1">
    <location>
        <position position="318"/>
    </location>
    <ligand>
        <name>isopentenyl diphosphate</name>
        <dbReference type="ChEBI" id="CHEBI:128769"/>
    </ligand>
</feature>
<feature type="binding site" evidence="1">
    <location>
        <position position="319"/>
    </location>
    <ligand>
        <name>(2E)-4-hydroxy-3-methylbut-2-enyl diphosphate</name>
        <dbReference type="ChEBI" id="CHEBI:128753"/>
    </ligand>
</feature>
<feature type="binding site" evidence="1">
    <location>
        <position position="319"/>
    </location>
    <ligand>
        <name>dimethylallyl diphosphate</name>
        <dbReference type="ChEBI" id="CHEBI:57623"/>
    </ligand>
</feature>
<feature type="binding site" evidence="1">
    <location>
        <position position="319"/>
    </location>
    <ligand>
        <name>isopentenyl diphosphate</name>
        <dbReference type="ChEBI" id="CHEBI:128769"/>
    </ligand>
</feature>
<feature type="binding site" evidence="1">
    <location>
        <position position="379"/>
    </location>
    <ligand>
        <name>(2E)-4-hydroxy-3-methylbut-2-enyl diphosphate</name>
        <dbReference type="ChEBI" id="CHEBI:128753"/>
    </ligand>
</feature>
<feature type="binding site" evidence="1">
    <location>
        <position position="379"/>
    </location>
    <ligand>
        <name>dimethylallyl diphosphate</name>
        <dbReference type="ChEBI" id="CHEBI:57623"/>
    </ligand>
</feature>
<feature type="binding site" evidence="1">
    <location>
        <position position="379"/>
    </location>
    <ligand>
        <name>isopentenyl diphosphate</name>
        <dbReference type="ChEBI" id="CHEBI:128769"/>
    </ligand>
</feature>
<protein>
    <recommendedName>
        <fullName evidence="1">4-hydroxy-3-methylbut-2-enyl diphosphate reductase</fullName>
        <shortName evidence="1">HMBPP reductase</shortName>
        <ecNumber evidence="1">1.17.7.4</ecNumber>
    </recommendedName>
</protein>
<proteinExistence type="inferred from homology"/>